<reference key="1">
    <citation type="journal article" date="2002" name="Nature">
        <title>The genome sequence of Schizosaccharomyces pombe.</title>
        <authorList>
            <person name="Wood V."/>
            <person name="Gwilliam R."/>
            <person name="Rajandream M.A."/>
            <person name="Lyne M.H."/>
            <person name="Lyne R."/>
            <person name="Stewart A."/>
            <person name="Sgouros J.G."/>
            <person name="Peat N."/>
            <person name="Hayles J."/>
            <person name="Baker S.G."/>
            <person name="Basham D."/>
            <person name="Bowman S."/>
            <person name="Brooks K."/>
            <person name="Brown D."/>
            <person name="Brown S."/>
            <person name="Chillingworth T."/>
            <person name="Churcher C.M."/>
            <person name="Collins M."/>
            <person name="Connor R."/>
            <person name="Cronin A."/>
            <person name="Davis P."/>
            <person name="Feltwell T."/>
            <person name="Fraser A."/>
            <person name="Gentles S."/>
            <person name="Goble A."/>
            <person name="Hamlin N."/>
            <person name="Harris D.E."/>
            <person name="Hidalgo J."/>
            <person name="Hodgson G."/>
            <person name="Holroyd S."/>
            <person name="Hornsby T."/>
            <person name="Howarth S."/>
            <person name="Huckle E.J."/>
            <person name="Hunt S."/>
            <person name="Jagels K."/>
            <person name="James K.D."/>
            <person name="Jones L."/>
            <person name="Jones M."/>
            <person name="Leather S."/>
            <person name="McDonald S."/>
            <person name="McLean J."/>
            <person name="Mooney P."/>
            <person name="Moule S."/>
            <person name="Mungall K.L."/>
            <person name="Murphy L.D."/>
            <person name="Niblett D."/>
            <person name="Odell C."/>
            <person name="Oliver K."/>
            <person name="O'Neil S."/>
            <person name="Pearson D."/>
            <person name="Quail M.A."/>
            <person name="Rabbinowitsch E."/>
            <person name="Rutherford K.M."/>
            <person name="Rutter S."/>
            <person name="Saunders D."/>
            <person name="Seeger K."/>
            <person name="Sharp S."/>
            <person name="Skelton J."/>
            <person name="Simmonds M.N."/>
            <person name="Squares R."/>
            <person name="Squares S."/>
            <person name="Stevens K."/>
            <person name="Taylor K."/>
            <person name="Taylor R.G."/>
            <person name="Tivey A."/>
            <person name="Walsh S.V."/>
            <person name="Warren T."/>
            <person name="Whitehead S."/>
            <person name="Woodward J.R."/>
            <person name="Volckaert G."/>
            <person name="Aert R."/>
            <person name="Robben J."/>
            <person name="Grymonprez B."/>
            <person name="Weltjens I."/>
            <person name="Vanstreels E."/>
            <person name="Rieger M."/>
            <person name="Schaefer M."/>
            <person name="Mueller-Auer S."/>
            <person name="Gabel C."/>
            <person name="Fuchs M."/>
            <person name="Duesterhoeft A."/>
            <person name="Fritzc C."/>
            <person name="Holzer E."/>
            <person name="Moestl D."/>
            <person name="Hilbert H."/>
            <person name="Borzym K."/>
            <person name="Langer I."/>
            <person name="Beck A."/>
            <person name="Lehrach H."/>
            <person name="Reinhardt R."/>
            <person name="Pohl T.M."/>
            <person name="Eger P."/>
            <person name="Zimmermann W."/>
            <person name="Wedler H."/>
            <person name="Wambutt R."/>
            <person name="Purnelle B."/>
            <person name="Goffeau A."/>
            <person name="Cadieu E."/>
            <person name="Dreano S."/>
            <person name="Gloux S."/>
            <person name="Lelaure V."/>
            <person name="Mottier S."/>
            <person name="Galibert F."/>
            <person name="Aves S.J."/>
            <person name="Xiang Z."/>
            <person name="Hunt C."/>
            <person name="Moore K."/>
            <person name="Hurst S.M."/>
            <person name="Lucas M."/>
            <person name="Rochet M."/>
            <person name="Gaillardin C."/>
            <person name="Tallada V.A."/>
            <person name="Garzon A."/>
            <person name="Thode G."/>
            <person name="Daga R.R."/>
            <person name="Cruzado L."/>
            <person name="Jimenez J."/>
            <person name="Sanchez M."/>
            <person name="del Rey F."/>
            <person name="Benito J."/>
            <person name="Dominguez A."/>
            <person name="Revuelta J.L."/>
            <person name="Moreno S."/>
            <person name="Armstrong J."/>
            <person name="Forsburg S.L."/>
            <person name="Cerutti L."/>
            <person name="Lowe T."/>
            <person name="McCombie W.R."/>
            <person name="Paulsen I."/>
            <person name="Potashkin J."/>
            <person name="Shpakovski G.V."/>
            <person name="Ussery D."/>
            <person name="Barrell B.G."/>
            <person name="Nurse P."/>
        </authorList>
    </citation>
    <scope>NUCLEOTIDE SEQUENCE [LARGE SCALE GENOMIC DNA]</scope>
    <source>
        <strain>972 / ATCC 24843</strain>
    </source>
</reference>
<reference key="2">
    <citation type="journal article" date="2006" name="Nat. Biotechnol.">
        <title>ORFeome cloning and global analysis of protein localization in the fission yeast Schizosaccharomyces pombe.</title>
        <authorList>
            <person name="Matsuyama A."/>
            <person name="Arai R."/>
            <person name="Yashiroda Y."/>
            <person name="Shirai A."/>
            <person name="Kamata A."/>
            <person name="Sekido S."/>
            <person name="Kobayashi Y."/>
            <person name="Hashimoto A."/>
            <person name="Hamamoto M."/>
            <person name="Hiraoka Y."/>
            <person name="Horinouchi S."/>
            <person name="Yoshida M."/>
        </authorList>
    </citation>
    <scope>SUBCELLULAR LOCATION [LARGE SCALE ANALYSIS]</scope>
</reference>
<reference key="3">
    <citation type="journal article" date="2017" name="RNA">
        <title>Involvement of fission yeast Pdc2 in RNA degradation and P-body function.</title>
        <authorList>
            <person name="Wang C.Y."/>
            <person name="Wang Y.T."/>
            <person name="Hsiao W.Y."/>
            <person name="Wang S.W."/>
        </authorList>
    </citation>
    <scope>FUNCTION</scope>
    <scope>SUBCELLULAR LOCATION</scope>
    <scope>INTERACTION WITH DCP2</scope>
    <scope>IDENTIFICATION BY MASS SPECTROMETRY</scope>
</reference>
<feature type="chain" id="PRO_0000372628" description="Deadenylation-dependent mRNA-decapping factor pdc2">
    <location>
        <begin position="1"/>
        <end position="754"/>
    </location>
</feature>
<feature type="region of interest" description="Interaction with lsm1" evidence="3">
    <location>
        <begin position="499"/>
        <end position="754"/>
    </location>
</feature>
<name>PAT1_SCHPO</name>
<proteinExistence type="evidence at protein level"/>
<protein>
    <recommendedName>
        <fullName evidence="5">Deadenylation-dependent mRNA-decapping factor pdc2</fullName>
    </recommendedName>
    <alternativeName>
        <fullName evidence="5">DNA topoisomerase 2-associated protein PAT1 homolog pdc2</fullName>
    </alternativeName>
    <alternativeName>
        <fullName evidence="4">Partner of decapping enzyme protein 2</fullName>
    </alternativeName>
    <alternativeName>
        <fullName>Protein PAT1 homolog pdc2</fullName>
    </alternativeName>
</protein>
<accession>O42958</accession>
<organism>
    <name type="scientific">Schizosaccharomyces pombe (strain 972 / ATCC 24843)</name>
    <name type="common">Fission yeast</name>
    <dbReference type="NCBI Taxonomy" id="284812"/>
    <lineage>
        <taxon>Eukaryota</taxon>
        <taxon>Fungi</taxon>
        <taxon>Dikarya</taxon>
        <taxon>Ascomycota</taxon>
        <taxon>Taphrinomycotina</taxon>
        <taxon>Schizosaccharomycetes</taxon>
        <taxon>Schizosaccharomycetales</taxon>
        <taxon>Schizosaccharomycetaceae</taxon>
        <taxon>Schizosaccharomyces</taxon>
    </lineage>
</organism>
<sequence length="754" mass="84117">MSFFGFNTTLPKENMFPNEGQLEEDGIDFEETYDDLGNQLNEAGDELNDETFGVSAGSIGRDFDFSGTTAQASAQLEDEQYQINQQNIFAKPVKPASSELPQVSRLNGASQFPSREPASTAINKLSDLQPMASIWENIVPEKPAIIPPEVASLQDRLGAQPSEKVFSLQELEEQLLNSMTAPKPPSQPAIPIVPSEMAAQVTRENISSLDPAISAASIGNVTFGQPNIPSTTTDFAGLAAPNMVHPSQAIPNPVMQPSLVPQMPYPQNGMYNPSVAPPASLVNLFQQEQLIQNQNLDEKRQKLERDHMLMAQCAGLMTRSDKSFIARIQISQLMSEDPESDDFYYRVYSIIRGRKPSEEEASHFIQTYLGPSNNRRRGRRSENPMQKLQQQLQRLVSSAKERPKATQLSLEGALGKIAVNTVRTPRQLLNVKRPTEPASSNSSLNNFSGFSTKKDVLHAIEKVYDLLLDFEQALRKASTLETTDQEQIDTWKTTLSEKLESIWKALYINESLEASSKTRPPFISIISHPKGMRLLPRLFPHLSKEQQISILKVVVYNFDSLDIVLRGTFDVNGELPLDVVSEMSSFTQFIIPPLLTIVNELDLETINNLFSQLLNRTNAVYLIQTKIGLSFLTLFISRAEILKQSGTVNQNEKEEWENTFNVMFNRVKGHFSTVFPPPNARAYADESYPWEFLAACATAASSEQHFTLVSETRDRVLDNIITSKRAPSEIAVVRISNVNLFLNAMGLDARQLSA</sequence>
<comment type="function">
    <text evidence="1 3">Activator of decapping that functions as a general and active mechanism of translational repression and required for P-body formation (PubMed:28031482). Stabilizes the 3' terminus of mRNAs and modulates the rates of mRNA-decapping that occur following deadenylation. Might be required for promoting the formation or the stabilization of the preinitiation translation complexes. Necessary for accurate chromosome transmission during cell division (By similarity). Together with lsm1, recruits the deadenylase ccr4 to P-bodies (PubMed:28031482).</text>
</comment>
<comment type="subunit">
    <text evidence="3">Interacts with dcp2. Interacts with lsm1; via C-terminus.</text>
</comment>
<comment type="subcellular location">
    <subcellularLocation>
        <location evidence="2 3">Cytoplasm</location>
    </subcellularLocation>
    <subcellularLocation>
        <location evidence="3">Nucleus</location>
    </subcellularLocation>
    <subcellularLocation>
        <location evidence="2 3">Cytoplasm</location>
        <location evidence="2 3">P-body</location>
    </subcellularLocation>
    <text evidence="2 3">Is concentrated in several cytoplasmic foci called P bodies (or cytoplasmic processing bodies) which represent sites of mRNA decapping and 5' to 3' exonucleotidic decay.</text>
</comment>
<comment type="similarity">
    <text evidence="5">Belongs to the PAT1 family.</text>
</comment>
<gene>
    <name evidence="4" type="primary">pdc2</name>
    <name type="ORF">SPBC19G7.10c</name>
</gene>
<dbReference type="EMBL" id="CU329671">
    <property type="protein sequence ID" value="CAA17064.2"/>
    <property type="molecule type" value="Genomic_DNA"/>
</dbReference>
<dbReference type="PIR" id="T39841">
    <property type="entry name" value="T39841"/>
</dbReference>
<dbReference type="RefSeq" id="NP_595976.2">
    <property type="nucleotide sequence ID" value="NM_001021884.3"/>
</dbReference>
<dbReference type="SMR" id="O42958"/>
<dbReference type="BioGRID" id="277297">
    <property type="interactions" value="25"/>
</dbReference>
<dbReference type="FunCoup" id="O42958">
    <property type="interactions" value="176"/>
</dbReference>
<dbReference type="STRING" id="284812.O42958"/>
<dbReference type="iPTMnet" id="O42958"/>
<dbReference type="PaxDb" id="4896-SPBC19G7.10c.1"/>
<dbReference type="EnsemblFungi" id="SPBC19G7.10c.1">
    <property type="protein sequence ID" value="SPBC19G7.10c.1:pep"/>
    <property type="gene ID" value="SPBC19G7.10c"/>
</dbReference>
<dbReference type="GeneID" id="2540778"/>
<dbReference type="KEGG" id="spo:2540778"/>
<dbReference type="PomBase" id="SPBC19G7.10c">
    <property type="gene designation" value="pdc2"/>
</dbReference>
<dbReference type="VEuPathDB" id="FungiDB:SPBC19G7.10c"/>
<dbReference type="eggNOG" id="KOG4592">
    <property type="taxonomic scope" value="Eukaryota"/>
</dbReference>
<dbReference type="HOGENOM" id="CLU_012622_1_0_1"/>
<dbReference type="InParanoid" id="O42958"/>
<dbReference type="OMA" id="YLEHSGH"/>
<dbReference type="PhylomeDB" id="O42958"/>
<dbReference type="Reactome" id="R-SPO-430039">
    <property type="pathway name" value="mRNA decay by 5' to 3' exoribonuclease"/>
</dbReference>
<dbReference type="CD-CODE" id="0808F6DD">
    <property type="entry name" value="P-body"/>
</dbReference>
<dbReference type="PRO" id="PR:O42958"/>
<dbReference type="Proteomes" id="UP000002485">
    <property type="component" value="Chromosome II"/>
</dbReference>
<dbReference type="GO" id="GO:0005737">
    <property type="term" value="C:cytoplasm"/>
    <property type="evidence" value="ECO:0007005"/>
    <property type="project" value="PomBase"/>
</dbReference>
<dbReference type="GO" id="GO:0005829">
    <property type="term" value="C:cytosol"/>
    <property type="evidence" value="ECO:0007005"/>
    <property type="project" value="PomBase"/>
</dbReference>
<dbReference type="GO" id="GO:0005634">
    <property type="term" value="C:nucleus"/>
    <property type="evidence" value="ECO:0007669"/>
    <property type="project" value="UniProtKB-SubCell"/>
</dbReference>
<dbReference type="GO" id="GO:0000932">
    <property type="term" value="C:P-body"/>
    <property type="evidence" value="ECO:0000353"/>
    <property type="project" value="PomBase"/>
</dbReference>
<dbReference type="GO" id="GO:0003723">
    <property type="term" value="F:RNA binding"/>
    <property type="evidence" value="ECO:0000318"/>
    <property type="project" value="GO_Central"/>
</dbReference>
<dbReference type="GO" id="GO:0000290">
    <property type="term" value="P:deadenylation-dependent decapping of nuclear-transcribed mRNA"/>
    <property type="evidence" value="ECO:0000314"/>
    <property type="project" value="PomBase"/>
</dbReference>
<dbReference type="GO" id="GO:0006397">
    <property type="term" value="P:mRNA processing"/>
    <property type="evidence" value="ECO:0007669"/>
    <property type="project" value="UniProtKB-KW"/>
</dbReference>
<dbReference type="GO" id="GO:0033962">
    <property type="term" value="P:P-body assembly"/>
    <property type="evidence" value="ECO:0000318"/>
    <property type="project" value="GO_Central"/>
</dbReference>
<dbReference type="GO" id="GO:0006417">
    <property type="term" value="P:regulation of translation"/>
    <property type="evidence" value="ECO:0007669"/>
    <property type="project" value="UniProtKB-KW"/>
</dbReference>
<dbReference type="InterPro" id="IPR039900">
    <property type="entry name" value="Pat1-like"/>
</dbReference>
<dbReference type="InterPro" id="IPR019167">
    <property type="entry name" value="PAT1_dom"/>
</dbReference>
<dbReference type="PANTHER" id="PTHR21551:SF0">
    <property type="entry name" value="PROTEIN ASSOCIATED WITH TOPO II RELATED-1, ISOFORM A"/>
    <property type="match status" value="1"/>
</dbReference>
<dbReference type="PANTHER" id="PTHR21551">
    <property type="entry name" value="TOPOISOMERASE II-ASSOCIATED PROTEIN PAT1"/>
    <property type="match status" value="1"/>
</dbReference>
<dbReference type="Pfam" id="PF09770">
    <property type="entry name" value="PAT1"/>
    <property type="match status" value="2"/>
</dbReference>
<keyword id="KW-0963">Cytoplasm</keyword>
<keyword id="KW-0507">mRNA processing</keyword>
<keyword id="KW-0539">Nucleus</keyword>
<keyword id="KW-1185">Reference proteome</keyword>
<keyword id="KW-0678">Repressor</keyword>
<keyword id="KW-0694">RNA-binding</keyword>
<keyword id="KW-0810">Translation regulation</keyword>
<evidence type="ECO:0000250" key="1">
    <source>
        <dbReference type="UniProtKB" id="P25644"/>
    </source>
</evidence>
<evidence type="ECO:0000269" key="2">
    <source>
    </source>
</evidence>
<evidence type="ECO:0000269" key="3">
    <source>
    </source>
</evidence>
<evidence type="ECO:0000303" key="4">
    <source>
    </source>
</evidence>
<evidence type="ECO:0000305" key="5"/>